<gene>
    <name type="ordered locus">MTBMA_c00120</name>
</gene>
<dbReference type="EC" id="3.6.1.66" evidence="1"/>
<dbReference type="EMBL" id="CP001710">
    <property type="protein sequence ID" value="ADL57624.1"/>
    <property type="molecule type" value="Genomic_DNA"/>
</dbReference>
<dbReference type="RefSeq" id="WP_013294853.1">
    <property type="nucleotide sequence ID" value="NC_014408.1"/>
</dbReference>
<dbReference type="SMR" id="D9PYS9"/>
<dbReference type="STRING" id="79929.MTBMA_c00120"/>
<dbReference type="PaxDb" id="79929-MTBMA_c00120"/>
<dbReference type="GeneID" id="43707464"/>
<dbReference type="GeneID" id="9703717"/>
<dbReference type="KEGG" id="mmg:MTBMA_c00120"/>
<dbReference type="PATRIC" id="fig|79929.8.peg.12"/>
<dbReference type="HOGENOM" id="CLU_082080_1_0_2"/>
<dbReference type="OrthoDB" id="372108at2157"/>
<dbReference type="Proteomes" id="UP000000345">
    <property type="component" value="Chromosome"/>
</dbReference>
<dbReference type="GO" id="GO:0005737">
    <property type="term" value="C:cytoplasm"/>
    <property type="evidence" value="ECO:0007669"/>
    <property type="project" value="TreeGrafter"/>
</dbReference>
<dbReference type="GO" id="GO:0035870">
    <property type="term" value="F:dITP diphosphatase activity"/>
    <property type="evidence" value="ECO:0007669"/>
    <property type="project" value="RHEA"/>
</dbReference>
<dbReference type="GO" id="GO:0036220">
    <property type="term" value="F:ITP diphosphatase activity"/>
    <property type="evidence" value="ECO:0007669"/>
    <property type="project" value="UniProtKB-EC"/>
</dbReference>
<dbReference type="GO" id="GO:0046872">
    <property type="term" value="F:metal ion binding"/>
    <property type="evidence" value="ECO:0007669"/>
    <property type="project" value="UniProtKB-KW"/>
</dbReference>
<dbReference type="GO" id="GO:0000166">
    <property type="term" value="F:nucleotide binding"/>
    <property type="evidence" value="ECO:0007669"/>
    <property type="project" value="UniProtKB-KW"/>
</dbReference>
<dbReference type="GO" id="GO:0017111">
    <property type="term" value="F:ribonucleoside triphosphate phosphatase activity"/>
    <property type="evidence" value="ECO:0007669"/>
    <property type="project" value="InterPro"/>
</dbReference>
<dbReference type="GO" id="GO:0036222">
    <property type="term" value="F:XTP diphosphatase activity"/>
    <property type="evidence" value="ECO:0007669"/>
    <property type="project" value="RHEA"/>
</dbReference>
<dbReference type="GO" id="GO:0009117">
    <property type="term" value="P:nucleotide metabolic process"/>
    <property type="evidence" value="ECO:0007669"/>
    <property type="project" value="UniProtKB-KW"/>
</dbReference>
<dbReference type="GO" id="GO:0009146">
    <property type="term" value="P:purine nucleoside triphosphate catabolic process"/>
    <property type="evidence" value="ECO:0007669"/>
    <property type="project" value="UniProtKB-UniRule"/>
</dbReference>
<dbReference type="CDD" id="cd00515">
    <property type="entry name" value="HAM1"/>
    <property type="match status" value="1"/>
</dbReference>
<dbReference type="FunFam" id="3.90.950.10:FF:000001">
    <property type="entry name" value="dITP/XTP pyrophosphatase"/>
    <property type="match status" value="1"/>
</dbReference>
<dbReference type="Gene3D" id="3.90.950.10">
    <property type="match status" value="1"/>
</dbReference>
<dbReference type="HAMAP" id="MF_01405">
    <property type="entry name" value="Non_canon_purine_NTPase"/>
    <property type="match status" value="1"/>
</dbReference>
<dbReference type="InterPro" id="IPR020922">
    <property type="entry name" value="dITP/XTP_pyrophosphatase"/>
</dbReference>
<dbReference type="InterPro" id="IPR029001">
    <property type="entry name" value="ITPase-like_fam"/>
</dbReference>
<dbReference type="InterPro" id="IPR002637">
    <property type="entry name" value="RdgB/HAM1"/>
</dbReference>
<dbReference type="NCBIfam" id="NF011396">
    <property type="entry name" value="PRK14821.1"/>
    <property type="match status" value="1"/>
</dbReference>
<dbReference type="NCBIfam" id="TIGR00042">
    <property type="entry name" value="RdgB/HAM1 family non-canonical purine NTP pyrophosphatase"/>
    <property type="match status" value="1"/>
</dbReference>
<dbReference type="PANTHER" id="PTHR11067:SF9">
    <property type="entry name" value="INOSINE TRIPHOSPHATE PYROPHOSPHATASE"/>
    <property type="match status" value="1"/>
</dbReference>
<dbReference type="PANTHER" id="PTHR11067">
    <property type="entry name" value="INOSINE TRIPHOSPHATE PYROPHOSPHATASE/HAM1 PROTEIN"/>
    <property type="match status" value="1"/>
</dbReference>
<dbReference type="Pfam" id="PF01725">
    <property type="entry name" value="Ham1p_like"/>
    <property type="match status" value="1"/>
</dbReference>
<dbReference type="SUPFAM" id="SSF52972">
    <property type="entry name" value="ITPase-like"/>
    <property type="match status" value="1"/>
</dbReference>
<name>IXTPA_METTM</name>
<sequence>MKVTFITGNKHKLSEAEKIFHDTGIELEHADLGYPELQGTLEEVARYGAEHAARIMDGPVIVEDAGLFIRALKWFPGPYSAYVQDTIGNRGILKLMENVEDRYAEFRSAVGFCAPKSEPEVFLGVVKGRIGTEERGTRGFAFDPLFYPEGMDRSFGELSTIEKNRFSHRSRALKKFAQWYTENYEVI</sequence>
<organism>
    <name type="scientific">Methanothermobacter marburgensis (strain ATCC BAA-927 / DSM 2133 / JCM 14651 / NBRC 100331 / OCM 82 / Marburg)</name>
    <name type="common">Methanobacterium thermoautotrophicum</name>
    <dbReference type="NCBI Taxonomy" id="79929"/>
    <lineage>
        <taxon>Archaea</taxon>
        <taxon>Methanobacteriati</taxon>
        <taxon>Methanobacteriota</taxon>
        <taxon>Methanomada group</taxon>
        <taxon>Methanobacteria</taxon>
        <taxon>Methanobacteriales</taxon>
        <taxon>Methanobacteriaceae</taxon>
        <taxon>Methanothermobacter</taxon>
    </lineage>
</organism>
<protein>
    <recommendedName>
        <fullName evidence="1">dITP/XTP pyrophosphatase</fullName>
        <ecNumber evidence="1">3.6.1.66</ecNumber>
    </recommendedName>
    <alternativeName>
        <fullName evidence="1">Non-canonical purine NTP pyrophosphatase</fullName>
    </alternativeName>
    <alternativeName>
        <fullName evidence="1">Non-standard purine NTP pyrophosphatase</fullName>
    </alternativeName>
    <alternativeName>
        <fullName evidence="1">Nucleoside-triphosphate diphosphatase</fullName>
    </alternativeName>
    <alternativeName>
        <fullName evidence="1">Nucleoside-triphosphate pyrophosphatase</fullName>
        <shortName evidence="1">NTPase</shortName>
    </alternativeName>
</protein>
<proteinExistence type="inferred from homology"/>
<reference key="1">
    <citation type="journal article" date="2010" name="J. Bacteriol.">
        <title>Complete genome sequence of Methanothermobacter marburgensis, a methanoarchaeon model organism.</title>
        <authorList>
            <person name="Liesegang H."/>
            <person name="Kaster A.K."/>
            <person name="Wiezer A."/>
            <person name="Goenrich M."/>
            <person name="Wollherr A."/>
            <person name="Seedorf H."/>
            <person name="Gottschalk G."/>
            <person name="Thauer R.K."/>
        </authorList>
    </citation>
    <scope>NUCLEOTIDE SEQUENCE [LARGE SCALE GENOMIC DNA]</scope>
    <source>
        <strain>ATCC BAA-927 / DSM 2133 / JCM 14651 / NBRC 100331 / OCM 82 / Marburg</strain>
    </source>
</reference>
<accession>D9PYS9</accession>
<evidence type="ECO:0000255" key="1">
    <source>
        <dbReference type="HAMAP-Rule" id="MF_01405"/>
    </source>
</evidence>
<comment type="function">
    <text evidence="1">Pyrophosphatase that catalyzes the hydrolysis of nucleoside triphosphates to their monophosphate derivatives, with a high preference for the non-canonical purine nucleotides XTP (xanthosine triphosphate), dITP (deoxyinosine triphosphate) and ITP. Seems to function as a house-cleaning enzyme that removes non-canonical purine nucleotides from the nucleotide pool, thus preventing their incorporation into DNA/RNA and avoiding chromosomal lesions.</text>
</comment>
<comment type="catalytic activity">
    <reaction evidence="1">
        <text>XTP + H2O = XMP + diphosphate + H(+)</text>
        <dbReference type="Rhea" id="RHEA:28610"/>
        <dbReference type="ChEBI" id="CHEBI:15377"/>
        <dbReference type="ChEBI" id="CHEBI:15378"/>
        <dbReference type="ChEBI" id="CHEBI:33019"/>
        <dbReference type="ChEBI" id="CHEBI:57464"/>
        <dbReference type="ChEBI" id="CHEBI:61314"/>
        <dbReference type="EC" id="3.6.1.66"/>
    </reaction>
</comment>
<comment type="catalytic activity">
    <reaction evidence="1">
        <text>dITP + H2O = dIMP + diphosphate + H(+)</text>
        <dbReference type="Rhea" id="RHEA:28342"/>
        <dbReference type="ChEBI" id="CHEBI:15377"/>
        <dbReference type="ChEBI" id="CHEBI:15378"/>
        <dbReference type="ChEBI" id="CHEBI:33019"/>
        <dbReference type="ChEBI" id="CHEBI:61194"/>
        <dbReference type="ChEBI" id="CHEBI:61382"/>
        <dbReference type="EC" id="3.6.1.66"/>
    </reaction>
</comment>
<comment type="catalytic activity">
    <reaction evidence="1">
        <text>ITP + H2O = IMP + diphosphate + H(+)</text>
        <dbReference type="Rhea" id="RHEA:29399"/>
        <dbReference type="ChEBI" id="CHEBI:15377"/>
        <dbReference type="ChEBI" id="CHEBI:15378"/>
        <dbReference type="ChEBI" id="CHEBI:33019"/>
        <dbReference type="ChEBI" id="CHEBI:58053"/>
        <dbReference type="ChEBI" id="CHEBI:61402"/>
        <dbReference type="EC" id="3.6.1.66"/>
    </reaction>
</comment>
<comment type="cofactor">
    <cofactor evidence="1">
        <name>Mg(2+)</name>
        <dbReference type="ChEBI" id="CHEBI:18420"/>
    </cofactor>
    <text evidence="1">Binds 1 Mg(2+) ion per subunit.</text>
</comment>
<comment type="subunit">
    <text evidence="1">Homodimer.</text>
</comment>
<comment type="similarity">
    <text evidence="1">Belongs to the HAM1 NTPase family.</text>
</comment>
<keyword id="KW-0378">Hydrolase</keyword>
<keyword id="KW-0460">Magnesium</keyword>
<keyword id="KW-0479">Metal-binding</keyword>
<keyword id="KW-0546">Nucleotide metabolism</keyword>
<keyword id="KW-0547">Nucleotide-binding</keyword>
<feature type="chain" id="PRO_0000410425" description="dITP/XTP pyrophosphatase">
    <location>
        <begin position="1"/>
        <end position="187"/>
    </location>
</feature>
<feature type="active site" description="Proton acceptor" evidence="1">
    <location>
        <position position="64"/>
    </location>
</feature>
<feature type="binding site" evidence="1">
    <location>
        <begin position="7"/>
        <end position="12"/>
    </location>
    <ligand>
        <name>substrate</name>
    </ligand>
</feature>
<feature type="binding site" evidence="1">
    <location>
        <position position="36"/>
    </location>
    <ligand>
        <name>Mg(2+)</name>
        <dbReference type="ChEBI" id="CHEBI:18420"/>
    </ligand>
</feature>
<feature type="binding site" evidence="1">
    <location>
        <position position="64"/>
    </location>
    <ligand>
        <name>Mg(2+)</name>
        <dbReference type="ChEBI" id="CHEBI:18420"/>
    </ligand>
</feature>
<feature type="binding site" evidence="1">
    <location>
        <position position="65"/>
    </location>
    <ligand>
        <name>substrate</name>
    </ligand>
</feature>
<feature type="binding site" evidence="1">
    <location>
        <begin position="140"/>
        <end position="143"/>
    </location>
    <ligand>
        <name>substrate</name>
    </ligand>
</feature>
<feature type="binding site" evidence="1">
    <location>
        <position position="163"/>
    </location>
    <ligand>
        <name>substrate</name>
    </ligand>
</feature>
<feature type="binding site" evidence="1">
    <location>
        <begin position="168"/>
        <end position="169"/>
    </location>
    <ligand>
        <name>substrate</name>
    </ligand>
</feature>